<dbReference type="EC" id="1.17.7.4" evidence="1"/>
<dbReference type="EMBL" id="CP000158">
    <property type="protein sequence ID" value="ABI77892.1"/>
    <property type="molecule type" value="Genomic_DNA"/>
</dbReference>
<dbReference type="RefSeq" id="WP_011647690.1">
    <property type="nucleotide sequence ID" value="NC_008358.1"/>
</dbReference>
<dbReference type="SMR" id="Q0BYQ0"/>
<dbReference type="STRING" id="228405.HNE_2713"/>
<dbReference type="KEGG" id="hne:HNE_2713"/>
<dbReference type="eggNOG" id="COG0761">
    <property type="taxonomic scope" value="Bacteria"/>
</dbReference>
<dbReference type="HOGENOM" id="CLU_027486_1_0_5"/>
<dbReference type="UniPathway" id="UPA00056">
    <property type="reaction ID" value="UER00097"/>
</dbReference>
<dbReference type="UniPathway" id="UPA00059">
    <property type="reaction ID" value="UER00105"/>
</dbReference>
<dbReference type="Proteomes" id="UP000001959">
    <property type="component" value="Chromosome"/>
</dbReference>
<dbReference type="GO" id="GO:0051539">
    <property type="term" value="F:4 iron, 4 sulfur cluster binding"/>
    <property type="evidence" value="ECO:0007669"/>
    <property type="project" value="UniProtKB-UniRule"/>
</dbReference>
<dbReference type="GO" id="GO:0051745">
    <property type="term" value="F:4-hydroxy-3-methylbut-2-enyl diphosphate reductase activity"/>
    <property type="evidence" value="ECO:0007669"/>
    <property type="project" value="UniProtKB-UniRule"/>
</dbReference>
<dbReference type="GO" id="GO:0046872">
    <property type="term" value="F:metal ion binding"/>
    <property type="evidence" value="ECO:0007669"/>
    <property type="project" value="UniProtKB-KW"/>
</dbReference>
<dbReference type="GO" id="GO:0050992">
    <property type="term" value="P:dimethylallyl diphosphate biosynthetic process"/>
    <property type="evidence" value="ECO:0007669"/>
    <property type="project" value="UniProtKB-UniRule"/>
</dbReference>
<dbReference type="GO" id="GO:0019288">
    <property type="term" value="P:isopentenyl diphosphate biosynthetic process, methylerythritol 4-phosphate pathway"/>
    <property type="evidence" value="ECO:0007669"/>
    <property type="project" value="UniProtKB-UniRule"/>
</dbReference>
<dbReference type="GO" id="GO:0016114">
    <property type="term" value="P:terpenoid biosynthetic process"/>
    <property type="evidence" value="ECO:0007669"/>
    <property type="project" value="UniProtKB-UniRule"/>
</dbReference>
<dbReference type="CDD" id="cd13944">
    <property type="entry name" value="lytB_ispH"/>
    <property type="match status" value="1"/>
</dbReference>
<dbReference type="Gene3D" id="3.40.50.11270">
    <property type="match status" value="1"/>
</dbReference>
<dbReference type="Gene3D" id="3.40.1010.20">
    <property type="entry name" value="4-hydroxy-3-methylbut-2-enyl diphosphate reductase, catalytic domain"/>
    <property type="match status" value="2"/>
</dbReference>
<dbReference type="HAMAP" id="MF_00191">
    <property type="entry name" value="IspH"/>
    <property type="match status" value="1"/>
</dbReference>
<dbReference type="InterPro" id="IPR003451">
    <property type="entry name" value="LytB/IspH"/>
</dbReference>
<dbReference type="NCBIfam" id="TIGR00216">
    <property type="entry name" value="ispH_lytB"/>
    <property type="match status" value="1"/>
</dbReference>
<dbReference type="NCBIfam" id="NF002188">
    <property type="entry name" value="PRK01045.1-2"/>
    <property type="match status" value="1"/>
</dbReference>
<dbReference type="NCBIfam" id="NF002190">
    <property type="entry name" value="PRK01045.1-4"/>
    <property type="match status" value="1"/>
</dbReference>
<dbReference type="PANTHER" id="PTHR30426">
    <property type="entry name" value="4-HYDROXY-3-METHYLBUT-2-ENYL DIPHOSPHATE REDUCTASE"/>
    <property type="match status" value="1"/>
</dbReference>
<dbReference type="PANTHER" id="PTHR30426:SF0">
    <property type="entry name" value="4-HYDROXY-3-METHYLBUT-2-ENYL DIPHOSPHATE REDUCTASE"/>
    <property type="match status" value="1"/>
</dbReference>
<dbReference type="Pfam" id="PF02401">
    <property type="entry name" value="LYTB"/>
    <property type="match status" value="1"/>
</dbReference>
<keyword id="KW-0004">4Fe-4S</keyword>
<keyword id="KW-0408">Iron</keyword>
<keyword id="KW-0411">Iron-sulfur</keyword>
<keyword id="KW-0414">Isoprene biosynthesis</keyword>
<keyword id="KW-0479">Metal-binding</keyword>
<keyword id="KW-0560">Oxidoreductase</keyword>
<keyword id="KW-1185">Reference proteome</keyword>
<accession>Q0BYQ0</accession>
<name>ISPH_HYPNA</name>
<protein>
    <recommendedName>
        <fullName evidence="1">4-hydroxy-3-methylbut-2-enyl diphosphate reductase</fullName>
        <shortName evidence="1">HMBPP reductase</shortName>
        <ecNumber evidence="1">1.17.7.4</ecNumber>
    </recommendedName>
</protein>
<comment type="function">
    <text evidence="1">Catalyzes the conversion of 1-hydroxy-2-methyl-2-(E)-butenyl 4-diphosphate (HMBPP) into a mixture of isopentenyl diphosphate (IPP) and dimethylallyl diphosphate (DMAPP). Acts in the terminal step of the DOXP/MEP pathway for isoprenoid precursor biosynthesis.</text>
</comment>
<comment type="catalytic activity">
    <reaction evidence="1">
        <text>isopentenyl diphosphate + 2 oxidized [2Fe-2S]-[ferredoxin] + H2O = (2E)-4-hydroxy-3-methylbut-2-enyl diphosphate + 2 reduced [2Fe-2S]-[ferredoxin] + 2 H(+)</text>
        <dbReference type="Rhea" id="RHEA:24488"/>
        <dbReference type="Rhea" id="RHEA-COMP:10000"/>
        <dbReference type="Rhea" id="RHEA-COMP:10001"/>
        <dbReference type="ChEBI" id="CHEBI:15377"/>
        <dbReference type="ChEBI" id="CHEBI:15378"/>
        <dbReference type="ChEBI" id="CHEBI:33737"/>
        <dbReference type="ChEBI" id="CHEBI:33738"/>
        <dbReference type="ChEBI" id="CHEBI:128753"/>
        <dbReference type="ChEBI" id="CHEBI:128769"/>
        <dbReference type="EC" id="1.17.7.4"/>
    </reaction>
</comment>
<comment type="catalytic activity">
    <reaction evidence="1">
        <text>dimethylallyl diphosphate + 2 oxidized [2Fe-2S]-[ferredoxin] + H2O = (2E)-4-hydroxy-3-methylbut-2-enyl diphosphate + 2 reduced [2Fe-2S]-[ferredoxin] + 2 H(+)</text>
        <dbReference type="Rhea" id="RHEA:24825"/>
        <dbReference type="Rhea" id="RHEA-COMP:10000"/>
        <dbReference type="Rhea" id="RHEA-COMP:10001"/>
        <dbReference type="ChEBI" id="CHEBI:15377"/>
        <dbReference type="ChEBI" id="CHEBI:15378"/>
        <dbReference type="ChEBI" id="CHEBI:33737"/>
        <dbReference type="ChEBI" id="CHEBI:33738"/>
        <dbReference type="ChEBI" id="CHEBI:57623"/>
        <dbReference type="ChEBI" id="CHEBI:128753"/>
        <dbReference type="EC" id="1.17.7.4"/>
    </reaction>
</comment>
<comment type="cofactor">
    <cofactor evidence="1">
        <name>[4Fe-4S] cluster</name>
        <dbReference type="ChEBI" id="CHEBI:49883"/>
    </cofactor>
    <text evidence="1">Binds 1 [4Fe-4S] cluster per subunit.</text>
</comment>
<comment type="pathway">
    <text evidence="1">Isoprenoid biosynthesis; dimethylallyl diphosphate biosynthesis; dimethylallyl diphosphate from (2E)-4-hydroxy-3-methylbutenyl diphosphate: step 1/1.</text>
</comment>
<comment type="pathway">
    <text evidence="1">Isoprenoid biosynthesis; isopentenyl diphosphate biosynthesis via DXP pathway; isopentenyl diphosphate from 1-deoxy-D-xylulose 5-phosphate: step 6/6.</text>
</comment>
<comment type="similarity">
    <text evidence="1">Belongs to the IspH family.</text>
</comment>
<gene>
    <name evidence="1" type="primary">ispH</name>
    <name type="ordered locus">HNE_2713</name>
</gene>
<feature type="chain" id="PRO_1000021133" description="4-hydroxy-3-methylbut-2-enyl diphosphate reductase">
    <location>
        <begin position="1"/>
        <end position="315"/>
    </location>
</feature>
<feature type="active site" description="Proton donor" evidence="1">
    <location>
        <position position="132"/>
    </location>
</feature>
<feature type="binding site" evidence="1">
    <location>
        <position position="18"/>
    </location>
    <ligand>
        <name>[4Fe-4S] cluster</name>
        <dbReference type="ChEBI" id="CHEBI:49883"/>
    </ligand>
</feature>
<feature type="binding site" evidence="1">
    <location>
        <position position="47"/>
    </location>
    <ligand>
        <name>(2E)-4-hydroxy-3-methylbut-2-enyl diphosphate</name>
        <dbReference type="ChEBI" id="CHEBI:128753"/>
    </ligand>
</feature>
<feature type="binding site" evidence="1">
    <location>
        <position position="47"/>
    </location>
    <ligand>
        <name>dimethylallyl diphosphate</name>
        <dbReference type="ChEBI" id="CHEBI:57623"/>
    </ligand>
</feature>
<feature type="binding site" evidence="1">
    <location>
        <position position="47"/>
    </location>
    <ligand>
        <name>isopentenyl diphosphate</name>
        <dbReference type="ChEBI" id="CHEBI:128769"/>
    </ligand>
</feature>
<feature type="binding site" evidence="1">
    <location>
        <position position="80"/>
    </location>
    <ligand>
        <name>(2E)-4-hydroxy-3-methylbut-2-enyl diphosphate</name>
        <dbReference type="ChEBI" id="CHEBI:128753"/>
    </ligand>
</feature>
<feature type="binding site" evidence="1">
    <location>
        <position position="80"/>
    </location>
    <ligand>
        <name>dimethylallyl diphosphate</name>
        <dbReference type="ChEBI" id="CHEBI:57623"/>
    </ligand>
</feature>
<feature type="binding site" evidence="1">
    <location>
        <position position="80"/>
    </location>
    <ligand>
        <name>isopentenyl diphosphate</name>
        <dbReference type="ChEBI" id="CHEBI:128769"/>
    </ligand>
</feature>
<feature type="binding site" evidence="1">
    <location>
        <position position="102"/>
    </location>
    <ligand>
        <name>[4Fe-4S] cluster</name>
        <dbReference type="ChEBI" id="CHEBI:49883"/>
    </ligand>
</feature>
<feature type="binding site" evidence="1">
    <location>
        <position position="130"/>
    </location>
    <ligand>
        <name>(2E)-4-hydroxy-3-methylbut-2-enyl diphosphate</name>
        <dbReference type="ChEBI" id="CHEBI:128753"/>
    </ligand>
</feature>
<feature type="binding site" evidence="1">
    <location>
        <position position="130"/>
    </location>
    <ligand>
        <name>dimethylallyl diphosphate</name>
        <dbReference type="ChEBI" id="CHEBI:57623"/>
    </ligand>
</feature>
<feature type="binding site" evidence="1">
    <location>
        <position position="130"/>
    </location>
    <ligand>
        <name>isopentenyl diphosphate</name>
        <dbReference type="ChEBI" id="CHEBI:128769"/>
    </ligand>
</feature>
<feature type="binding site" evidence="1">
    <location>
        <position position="171"/>
    </location>
    <ligand>
        <name>(2E)-4-hydroxy-3-methylbut-2-enyl diphosphate</name>
        <dbReference type="ChEBI" id="CHEBI:128753"/>
    </ligand>
</feature>
<feature type="binding site" evidence="1">
    <location>
        <position position="201"/>
    </location>
    <ligand>
        <name>[4Fe-4S] cluster</name>
        <dbReference type="ChEBI" id="CHEBI:49883"/>
    </ligand>
</feature>
<feature type="binding site" evidence="1">
    <location>
        <position position="229"/>
    </location>
    <ligand>
        <name>(2E)-4-hydroxy-3-methylbut-2-enyl diphosphate</name>
        <dbReference type="ChEBI" id="CHEBI:128753"/>
    </ligand>
</feature>
<feature type="binding site" evidence="1">
    <location>
        <position position="229"/>
    </location>
    <ligand>
        <name>dimethylallyl diphosphate</name>
        <dbReference type="ChEBI" id="CHEBI:57623"/>
    </ligand>
</feature>
<feature type="binding site" evidence="1">
    <location>
        <position position="229"/>
    </location>
    <ligand>
        <name>isopentenyl diphosphate</name>
        <dbReference type="ChEBI" id="CHEBI:128769"/>
    </ligand>
</feature>
<feature type="binding site" evidence="1">
    <location>
        <position position="230"/>
    </location>
    <ligand>
        <name>(2E)-4-hydroxy-3-methylbut-2-enyl diphosphate</name>
        <dbReference type="ChEBI" id="CHEBI:128753"/>
    </ligand>
</feature>
<feature type="binding site" evidence="1">
    <location>
        <position position="230"/>
    </location>
    <ligand>
        <name>dimethylallyl diphosphate</name>
        <dbReference type="ChEBI" id="CHEBI:57623"/>
    </ligand>
</feature>
<feature type="binding site" evidence="1">
    <location>
        <position position="230"/>
    </location>
    <ligand>
        <name>isopentenyl diphosphate</name>
        <dbReference type="ChEBI" id="CHEBI:128769"/>
    </ligand>
</feature>
<feature type="binding site" evidence="1">
    <location>
        <position position="231"/>
    </location>
    <ligand>
        <name>(2E)-4-hydroxy-3-methylbut-2-enyl diphosphate</name>
        <dbReference type="ChEBI" id="CHEBI:128753"/>
    </ligand>
</feature>
<feature type="binding site" evidence="1">
    <location>
        <position position="231"/>
    </location>
    <ligand>
        <name>dimethylallyl diphosphate</name>
        <dbReference type="ChEBI" id="CHEBI:57623"/>
    </ligand>
</feature>
<feature type="binding site" evidence="1">
    <location>
        <position position="231"/>
    </location>
    <ligand>
        <name>isopentenyl diphosphate</name>
        <dbReference type="ChEBI" id="CHEBI:128769"/>
    </ligand>
</feature>
<feature type="binding site" evidence="1">
    <location>
        <position position="274"/>
    </location>
    <ligand>
        <name>(2E)-4-hydroxy-3-methylbut-2-enyl diphosphate</name>
        <dbReference type="ChEBI" id="CHEBI:128753"/>
    </ligand>
</feature>
<feature type="binding site" evidence="1">
    <location>
        <position position="274"/>
    </location>
    <ligand>
        <name>dimethylallyl diphosphate</name>
        <dbReference type="ChEBI" id="CHEBI:57623"/>
    </ligand>
</feature>
<feature type="binding site" evidence="1">
    <location>
        <position position="274"/>
    </location>
    <ligand>
        <name>isopentenyl diphosphate</name>
        <dbReference type="ChEBI" id="CHEBI:128769"/>
    </ligand>
</feature>
<sequence>MTTKPPLTLRLAAPRGFCAGVDRAIQIVEEALKKWGAPVYVRHEIVHNRHVVERLEALGAIFVEELEECPDDRPVIFSAHGVPKSVPAEAGRRNMIYVDATCPLVSKVHVEAERHFNAAREIVLIGHAGHPEVIGTMGQLPEGSVALIETVEDARAFQPRDHANLAFITQTTLSVDDTADIVAALQSRFPGIATPHKEDICYATTNRQEAVKVFAPGAELVLVIGARTSSNSVRLVEVALRAGAQDAKLIASADDIDWSWFNGITTLGLTAGASAPEDLVQGVIEACRDRFEVTVETVKTADETVTFKLPRVLAG</sequence>
<evidence type="ECO:0000255" key="1">
    <source>
        <dbReference type="HAMAP-Rule" id="MF_00191"/>
    </source>
</evidence>
<reference key="1">
    <citation type="journal article" date="2006" name="J. Bacteriol.">
        <title>Comparative genomic evidence for a close relationship between the dimorphic prosthecate bacteria Hyphomonas neptunium and Caulobacter crescentus.</title>
        <authorList>
            <person name="Badger J.H."/>
            <person name="Hoover T.R."/>
            <person name="Brun Y.V."/>
            <person name="Weiner R.M."/>
            <person name="Laub M.T."/>
            <person name="Alexandre G."/>
            <person name="Mrazek J."/>
            <person name="Ren Q."/>
            <person name="Paulsen I.T."/>
            <person name="Nelson K.E."/>
            <person name="Khouri H.M."/>
            <person name="Radune D."/>
            <person name="Sosa J."/>
            <person name="Dodson R.J."/>
            <person name="Sullivan S.A."/>
            <person name="Rosovitz M.J."/>
            <person name="Madupu R."/>
            <person name="Brinkac L.M."/>
            <person name="Durkin A.S."/>
            <person name="Daugherty S.C."/>
            <person name="Kothari S.P."/>
            <person name="Giglio M.G."/>
            <person name="Zhou L."/>
            <person name="Haft D.H."/>
            <person name="Selengut J.D."/>
            <person name="Davidsen T.M."/>
            <person name="Yang Q."/>
            <person name="Zafar N."/>
            <person name="Ward N.L."/>
        </authorList>
    </citation>
    <scope>NUCLEOTIDE SEQUENCE [LARGE SCALE GENOMIC DNA]</scope>
    <source>
        <strain>ATCC 15444</strain>
    </source>
</reference>
<proteinExistence type="inferred from homology"/>
<organism>
    <name type="scientific">Hyphomonas neptunium (strain ATCC 15444)</name>
    <dbReference type="NCBI Taxonomy" id="228405"/>
    <lineage>
        <taxon>Bacteria</taxon>
        <taxon>Pseudomonadati</taxon>
        <taxon>Pseudomonadota</taxon>
        <taxon>Alphaproteobacteria</taxon>
        <taxon>Hyphomonadales</taxon>
        <taxon>Hyphomonadaceae</taxon>
        <taxon>Hyphomonas</taxon>
    </lineage>
</organism>